<dbReference type="EMBL" id="AF247162">
    <property type="protein sequence ID" value="AAF62180.1"/>
    <property type="molecule type" value="mRNA"/>
</dbReference>
<dbReference type="EMBL" id="AF394546">
    <property type="protein sequence ID" value="AAL24482.1"/>
    <property type="molecule type" value="Genomic_DNA"/>
</dbReference>
<dbReference type="EMBL" id="AP004114">
    <property type="protein sequence ID" value="BAD15536.1"/>
    <property type="molecule type" value="Genomic_DNA"/>
</dbReference>
<dbReference type="EMBL" id="AP005297">
    <property type="protein sequence ID" value="BAD16120.1"/>
    <property type="molecule type" value="Genomic_DNA"/>
</dbReference>
<dbReference type="EMBL" id="AP008208">
    <property type="protein sequence ID" value="BAF10015.1"/>
    <property type="molecule type" value="Genomic_DNA"/>
</dbReference>
<dbReference type="EMBL" id="AP014958">
    <property type="protein sequence ID" value="BAS80884.1"/>
    <property type="molecule type" value="Genomic_DNA"/>
</dbReference>
<dbReference type="EMBL" id="CM000139">
    <property type="protein sequence ID" value="EAZ24596.1"/>
    <property type="molecule type" value="Genomic_DNA"/>
</dbReference>
<dbReference type="EMBL" id="AK073572">
    <property type="protein sequence ID" value="BAG93527.1"/>
    <property type="molecule type" value="mRNA"/>
</dbReference>
<dbReference type="RefSeq" id="XP_015623675.1">
    <property type="nucleotide sequence ID" value="XM_015768189.1"/>
</dbReference>
<dbReference type="SMR" id="Q6ZGU9"/>
<dbReference type="FunCoup" id="Q6ZGU9">
    <property type="interactions" value="3"/>
</dbReference>
<dbReference type="STRING" id="39947.Q6ZGU9"/>
<dbReference type="PaxDb" id="39947-Q6ZGU9"/>
<dbReference type="EnsemblPlants" id="Os02t0744200-01">
    <property type="protein sequence ID" value="Os02t0744200-01"/>
    <property type="gene ID" value="Os02g0744200"/>
</dbReference>
<dbReference type="Gramene" id="Os02t0744200-01">
    <property type="protein sequence ID" value="Os02t0744200-01"/>
    <property type="gene ID" value="Os02g0744200"/>
</dbReference>
<dbReference type="KEGG" id="dosa:Os02g0744200"/>
<dbReference type="eggNOG" id="ENOG502QPUJ">
    <property type="taxonomic scope" value="Eukaryota"/>
</dbReference>
<dbReference type="HOGENOM" id="CLU_027462_0_2_1"/>
<dbReference type="InParanoid" id="Q6ZGU9"/>
<dbReference type="OMA" id="SAGWQAM"/>
<dbReference type="OrthoDB" id="5823761at2759"/>
<dbReference type="Proteomes" id="UP000000763">
    <property type="component" value="Chromosome 2"/>
</dbReference>
<dbReference type="Proteomes" id="UP000007752">
    <property type="component" value="Chromosome 2"/>
</dbReference>
<dbReference type="Proteomes" id="UP000059680">
    <property type="component" value="Chromosome 2"/>
</dbReference>
<dbReference type="GO" id="GO:0005576">
    <property type="term" value="C:extracellular region"/>
    <property type="evidence" value="ECO:0007669"/>
    <property type="project" value="UniProtKB-KW"/>
</dbReference>
<dbReference type="GO" id="GO:0016020">
    <property type="term" value="C:membrane"/>
    <property type="evidence" value="ECO:0007669"/>
    <property type="project" value="UniProtKB-SubCell"/>
</dbReference>
<dbReference type="GO" id="GO:0009828">
    <property type="term" value="P:plant-type cell wall loosening"/>
    <property type="evidence" value="ECO:0000250"/>
    <property type="project" value="UniProtKB"/>
</dbReference>
<dbReference type="CDD" id="cd22274">
    <property type="entry name" value="DPBB_EXPA_N"/>
    <property type="match status" value="1"/>
</dbReference>
<dbReference type="FunFam" id="2.40.40.10:FF:000001">
    <property type="entry name" value="Expansin"/>
    <property type="match status" value="1"/>
</dbReference>
<dbReference type="FunFam" id="2.60.40.760:FF:000001">
    <property type="entry name" value="Expansin"/>
    <property type="match status" value="1"/>
</dbReference>
<dbReference type="Gene3D" id="2.60.40.760">
    <property type="entry name" value="Expansin, cellulose-binding-like domain"/>
    <property type="match status" value="1"/>
</dbReference>
<dbReference type="Gene3D" id="2.40.40.10">
    <property type="entry name" value="RlpA-like domain"/>
    <property type="match status" value="1"/>
</dbReference>
<dbReference type="InterPro" id="IPR007118">
    <property type="entry name" value="Expan_Lol_pI"/>
</dbReference>
<dbReference type="InterPro" id="IPR002963">
    <property type="entry name" value="Expansin"/>
</dbReference>
<dbReference type="InterPro" id="IPR007112">
    <property type="entry name" value="Expansin/allergen_DPBB_dom"/>
</dbReference>
<dbReference type="InterPro" id="IPR007117">
    <property type="entry name" value="Expansin_CBD"/>
</dbReference>
<dbReference type="InterPro" id="IPR036749">
    <property type="entry name" value="Expansin_CBD_sf"/>
</dbReference>
<dbReference type="InterPro" id="IPR009009">
    <property type="entry name" value="RlpA-like_DPBB"/>
</dbReference>
<dbReference type="InterPro" id="IPR036908">
    <property type="entry name" value="RlpA-like_sf"/>
</dbReference>
<dbReference type="PANTHER" id="PTHR31867">
    <property type="entry name" value="EXPANSIN-A15"/>
    <property type="match status" value="1"/>
</dbReference>
<dbReference type="Pfam" id="PF03330">
    <property type="entry name" value="DPBB_1"/>
    <property type="match status" value="1"/>
</dbReference>
<dbReference type="Pfam" id="PF01357">
    <property type="entry name" value="Expansin_C"/>
    <property type="match status" value="1"/>
</dbReference>
<dbReference type="PRINTS" id="PR01226">
    <property type="entry name" value="EXPANSIN"/>
</dbReference>
<dbReference type="PRINTS" id="PR01225">
    <property type="entry name" value="EXPANSNFAMLY"/>
</dbReference>
<dbReference type="SMART" id="SM00837">
    <property type="entry name" value="DPBB_1"/>
    <property type="match status" value="1"/>
</dbReference>
<dbReference type="SUPFAM" id="SSF50685">
    <property type="entry name" value="Barwin-like endoglucanases"/>
    <property type="match status" value="1"/>
</dbReference>
<dbReference type="SUPFAM" id="SSF49590">
    <property type="entry name" value="PHL pollen allergen"/>
    <property type="match status" value="1"/>
</dbReference>
<dbReference type="PROSITE" id="PS50843">
    <property type="entry name" value="EXPANSIN_CBD"/>
    <property type="match status" value="1"/>
</dbReference>
<dbReference type="PROSITE" id="PS50842">
    <property type="entry name" value="EXPANSIN_EG45"/>
    <property type="match status" value="1"/>
</dbReference>
<name>EXPA5_ORYSJ</name>
<proteinExistence type="evidence at transcript level"/>
<evidence type="ECO:0000250" key="1"/>
<evidence type="ECO:0000255" key="2"/>
<evidence type="ECO:0000255" key="3">
    <source>
        <dbReference type="PROSITE-ProRule" id="PRU00078"/>
    </source>
</evidence>
<evidence type="ECO:0000255" key="4">
    <source>
        <dbReference type="PROSITE-ProRule" id="PRU00079"/>
    </source>
</evidence>
<evidence type="ECO:0000256" key="5">
    <source>
        <dbReference type="SAM" id="MobiDB-lite"/>
    </source>
</evidence>
<evidence type="ECO:0000269" key="6">
    <source>
    </source>
</evidence>
<evidence type="ECO:0000269" key="7">
    <source>
    </source>
</evidence>
<evidence type="ECO:0000305" key="8"/>
<evidence type="ECO:0000312" key="9">
    <source>
        <dbReference type="EMBL" id="EAZ24596.1"/>
    </source>
</evidence>
<reference key="1">
    <citation type="journal article" date="2002" name="Plant Physiol.">
        <title>Expression of alpha-expansin and expansin-like genes in deepwater rice.</title>
        <authorList>
            <person name="Lee Y."/>
            <person name="Kende H."/>
        </authorList>
    </citation>
    <scope>NUCLEOTIDE SEQUENCE [GENOMIC DNA / MRNA]</scope>
    <scope>DEVELOPMENTAL STAGE</scope>
    <scope>INDUCTION</scope>
</reference>
<reference key="2">
    <citation type="journal article" date="2005" name="Nature">
        <title>The map-based sequence of the rice genome.</title>
        <authorList>
            <consortium name="International rice genome sequencing project (IRGSP)"/>
        </authorList>
    </citation>
    <scope>NUCLEOTIDE SEQUENCE [LARGE SCALE GENOMIC DNA]</scope>
    <source>
        <strain>cv. Nipponbare</strain>
    </source>
</reference>
<reference key="3">
    <citation type="journal article" date="2008" name="Nucleic Acids Res.">
        <title>The rice annotation project database (RAP-DB): 2008 update.</title>
        <authorList>
            <consortium name="The rice annotation project (RAP)"/>
        </authorList>
    </citation>
    <scope>GENOME REANNOTATION</scope>
    <source>
        <strain>cv. Nipponbare</strain>
    </source>
</reference>
<reference key="4">
    <citation type="journal article" date="2013" name="Rice">
        <title>Improvement of the Oryza sativa Nipponbare reference genome using next generation sequence and optical map data.</title>
        <authorList>
            <person name="Kawahara Y."/>
            <person name="de la Bastide M."/>
            <person name="Hamilton J.P."/>
            <person name="Kanamori H."/>
            <person name="McCombie W.R."/>
            <person name="Ouyang S."/>
            <person name="Schwartz D.C."/>
            <person name="Tanaka T."/>
            <person name="Wu J."/>
            <person name="Zhou S."/>
            <person name="Childs K.L."/>
            <person name="Davidson R.M."/>
            <person name="Lin H."/>
            <person name="Quesada-Ocampo L."/>
            <person name="Vaillancourt B."/>
            <person name="Sakai H."/>
            <person name="Lee S.S."/>
            <person name="Kim J."/>
            <person name="Numa H."/>
            <person name="Itoh T."/>
            <person name="Buell C.R."/>
            <person name="Matsumoto T."/>
        </authorList>
    </citation>
    <scope>GENOME REANNOTATION</scope>
    <source>
        <strain>cv. Nipponbare</strain>
    </source>
</reference>
<reference key="5">
    <citation type="journal article" date="2005" name="PLoS Biol.">
        <title>The genomes of Oryza sativa: a history of duplications.</title>
        <authorList>
            <person name="Yu J."/>
            <person name="Wang J."/>
            <person name="Lin W."/>
            <person name="Li S."/>
            <person name="Li H."/>
            <person name="Zhou J."/>
            <person name="Ni P."/>
            <person name="Dong W."/>
            <person name="Hu S."/>
            <person name="Zeng C."/>
            <person name="Zhang J."/>
            <person name="Zhang Y."/>
            <person name="Li R."/>
            <person name="Xu Z."/>
            <person name="Li S."/>
            <person name="Li X."/>
            <person name="Zheng H."/>
            <person name="Cong L."/>
            <person name="Lin L."/>
            <person name="Yin J."/>
            <person name="Geng J."/>
            <person name="Li G."/>
            <person name="Shi J."/>
            <person name="Liu J."/>
            <person name="Lv H."/>
            <person name="Li J."/>
            <person name="Wang J."/>
            <person name="Deng Y."/>
            <person name="Ran L."/>
            <person name="Shi X."/>
            <person name="Wang X."/>
            <person name="Wu Q."/>
            <person name="Li C."/>
            <person name="Ren X."/>
            <person name="Wang J."/>
            <person name="Wang X."/>
            <person name="Li D."/>
            <person name="Liu D."/>
            <person name="Zhang X."/>
            <person name="Ji Z."/>
            <person name="Zhao W."/>
            <person name="Sun Y."/>
            <person name="Zhang Z."/>
            <person name="Bao J."/>
            <person name="Han Y."/>
            <person name="Dong L."/>
            <person name="Ji J."/>
            <person name="Chen P."/>
            <person name="Wu S."/>
            <person name="Liu J."/>
            <person name="Xiao Y."/>
            <person name="Bu D."/>
            <person name="Tan J."/>
            <person name="Yang L."/>
            <person name="Ye C."/>
            <person name="Zhang J."/>
            <person name="Xu J."/>
            <person name="Zhou Y."/>
            <person name="Yu Y."/>
            <person name="Zhang B."/>
            <person name="Zhuang S."/>
            <person name="Wei H."/>
            <person name="Liu B."/>
            <person name="Lei M."/>
            <person name="Yu H."/>
            <person name="Li Y."/>
            <person name="Xu H."/>
            <person name="Wei S."/>
            <person name="He X."/>
            <person name="Fang L."/>
            <person name="Zhang Z."/>
            <person name="Zhang Y."/>
            <person name="Huang X."/>
            <person name="Su Z."/>
            <person name="Tong W."/>
            <person name="Li J."/>
            <person name="Tong Z."/>
            <person name="Li S."/>
            <person name="Ye J."/>
            <person name="Wang L."/>
            <person name="Fang L."/>
            <person name="Lei T."/>
            <person name="Chen C.-S."/>
            <person name="Chen H.-C."/>
            <person name="Xu Z."/>
            <person name="Li H."/>
            <person name="Huang H."/>
            <person name="Zhang F."/>
            <person name="Xu H."/>
            <person name="Li N."/>
            <person name="Zhao C."/>
            <person name="Li S."/>
            <person name="Dong L."/>
            <person name="Huang Y."/>
            <person name="Li L."/>
            <person name="Xi Y."/>
            <person name="Qi Q."/>
            <person name="Li W."/>
            <person name="Zhang B."/>
            <person name="Hu W."/>
            <person name="Zhang Y."/>
            <person name="Tian X."/>
            <person name="Jiao Y."/>
            <person name="Liang X."/>
            <person name="Jin J."/>
            <person name="Gao L."/>
            <person name="Zheng W."/>
            <person name="Hao B."/>
            <person name="Liu S.-M."/>
            <person name="Wang W."/>
            <person name="Yuan L."/>
            <person name="Cao M."/>
            <person name="McDermott J."/>
            <person name="Samudrala R."/>
            <person name="Wang J."/>
            <person name="Wong G.K.-S."/>
            <person name="Yang H."/>
        </authorList>
    </citation>
    <scope>NUCLEOTIDE SEQUENCE [LARGE SCALE GENOMIC DNA]</scope>
    <source>
        <strain>cv. Nipponbare</strain>
    </source>
</reference>
<reference key="6">
    <citation type="journal article" date="2003" name="Science">
        <title>Collection, mapping, and annotation of over 28,000 cDNA clones from japonica rice.</title>
        <authorList>
            <consortium name="The rice full-length cDNA consortium"/>
        </authorList>
    </citation>
    <scope>NUCLEOTIDE SEQUENCE [LARGE SCALE MRNA]</scope>
    <source>
        <strain>cv. Nipponbare</strain>
    </source>
</reference>
<reference key="7">
    <citation type="journal article" date="2004" name="Plant Mol. Biol.">
        <title>Nomenclature for members of the expansin superfamily of genes and proteins.</title>
        <authorList>
            <person name="Kende H."/>
            <person name="Bradford K.J."/>
            <person name="Brummell D.A."/>
            <person name="Cho H.-T."/>
            <person name="Cosgrove D.J."/>
            <person name="Fleming A.J."/>
            <person name="Gehring C."/>
            <person name="Lee Y."/>
            <person name="McQueen-Mason S.J."/>
            <person name="Rose J.K.C."/>
            <person name="Voesenek L.A.C."/>
        </authorList>
    </citation>
    <scope>NOMENCLATURE</scope>
</reference>
<reference key="8">
    <citation type="journal article" date="2005" name="Mol. Cells">
        <title>Characterization and transcriptional expression of the alpha-expansin gene family in rice.</title>
        <authorList>
            <person name="Shin J.-H."/>
            <person name="Jeong D.-H."/>
            <person name="Park M.C."/>
            <person name="An G."/>
        </authorList>
    </citation>
    <scope>TISSUE SPECIFICITY</scope>
</reference>
<comment type="function">
    <text evidence="1">May cause loosening and extension of plant cell walls by disrupting non-covalent bonding between cellulose microfibrils and matrix glucans. No enzymatic activity has been found. May be required for rapid internodal elongation in deepwater rice during submergence (By similarity).</text>
</comment>
<comment type="subcellular location">
    <subcellularLocation>
        <location evidence="1">Secreted</location>
        <location evidence="1">Cell wall</location>
    </subcellularLocation>
    <subcellularLocation>
        <location evidence="1">Membrane</location>
        <topology evidence="1">Peripheral membrane protein</topology>
    </subcellularLocation>
</comment>
<comment type="tissue specificity">
    <text evidence="7">Expressed in panicles and flowers.</text>
</comment>
<comment type="developmental stage">
    <text evidence="6">Expressed in the growing regions of roots, coleoptiles, internodes and leaves.</text>
</comment>
<comment type="induction">
    <text evidence="6">By gibberellin (GA3) and wounding.</text>
</comment>
<comment type="similarity">
    <text evidence="8">Belongs to the expansin family. Expansin A subfamily.</text>
</comment>
<comment type="online information" name="EXPANSIN homepage">
    <link uri="https://www.dept.psu.edu/biology/groups/expansins/index.htm"/>
</comment>
<accession>Q6ZGU9</accession>
<accession>Q0DXM3</accession>
<accession>Q9M4X8</accession>
<gene>
    <name type="primary">EXPA5</name>
    <name type="synonym">EXP5</name>
    <name type="ordered locus">Os02g0744200</name>
    <name type="ordered locus">LOC_Os02g51040</name>
    <name type="ORF">OJ1118_G04.3</name>
    <name type="ORF">OJ1734_E02.30</name>
    <name evidence="9" type="ORF">OsJ_08358</name>
</gene>
<sequence>MSSRRDVLAVVLVAALLPPALSRGLWLGHHGLGHGHGRWRAPHVGGHGQGQGPQQHAPLGGGGWSSAHATFYGGGDASGTMGGACGYGNLYSQGYGTNTAALSTALFNNGLSCGACFEVRCDAGGGGSHSCLPGSVVVTATNFCPPNNALPSDDGGWCNPPRAHFDMSQPVFQRIALFKAGIVPVSYRRVACQKKGGIRFTINGHSYFNLVLVTNVGGAGDVHAVAVKSERSAAWQALSRNWGQNWQSAALLDGQALSFRVTTGDGRSVVSNNAVPRGWSFGQTFSGAQFN</sequence>
<feature type="signal peptide" evidence="2">
    <location>
        <begin position="1"/>
        <end position="22"/>
    </location>
</feature>
<feature type="chain" id="PRO_0000251984" description="Expansin-A5">
    <location>
        <begin position="23"/>
        <end position="291"/>
    </location>
</feature>
<feature type="domain" description="Expansin-like EG45" evidence="4">
    <location>
        <begin position="82"/>
        <end position="197"/>
    </location>
</feature>
<feature type="domain" description="Expansin-like CBD" evidence="3">
    <location>
        <begin position="207"/>
        <end position="287"/>
    </location>
</feature>
<feature type="region of interest" description="Disordered" evidence="5">
    <location>
        <begin position="37"/>
        <end position="61"/>
    </location>
</feature>
<feature type="disulfide bond" evidence="4">
    <location>
        <begin position="85"/>
        <end position="113"/>
    </location>
</feature>
<feature type="disulfide bond" evidence="4">
    <location>
        <begin position="116"/>
        <end position="192"/>
    </location>
</feature>
<feature type="disulfide bond" evidence="4">
    <location>
        <begin position="121"/>
        <end position="131"/>
    </location>
</feature>
<keyword id="KW-0134">Cell wall</keyword>
<keyword id="KW-0961">Cell wall biogenesis/degradation</keyword>
<keyword id="KW-1015">Disulfide bond</keyword>
<keyword id="KW-0472">Membrane</keyword>
<keyword id="KW-1185">Reference proteome</keyword>
<keyword id="KW-0964">Secreted</keyword>
<keyword id="KW-0732">Signal</keyword>
<organism>
    <name type="scientific">Oryza sativa subsp. japonica</name>
    <name type="common">Rice</name>
    <dbReference type="NCBI Taxonomy" id="39947"/>
    <lineage>
        <taxon>Eukaryota</taxon>
        <taxon>Viridiplantae</taxon>
        <taxon>Streptophyta</taxon>
        <taxon>Embryophyta</taxon>
        <taxon>Tracheophyta</taxon>
        <taxon>Spermatophyta</taxon>
        <taxon>Magnoliopsida</taxon>
        <taxon>Liliopsida</taxon>
        <taxon>Poales</taxon>
        <taxon>Poaceae</taxon>
        <taxon>BOP clade</taxon>
        <taxon>Oryzoideae</taxon>
        <taxon>Oryzeae</taxon>
        <taxon>Oryzinae</taxon>
        <taxon>Oryza</taxon>
        <taxon>Oryza sativa</taxon>
    </lineage>
</organism>
<protein>
    <recommendedName>
        <fullName>Expansin-A5</fullName>
    </recommendedName>
    <alternativeName>
        <fullName>Alpha-expansin-5</fullName>
    </alternativeName>
    <alternativeName>
        <fullName>OsEXP5</fullName>
    </alternativeName>
    <alternativeName>
        <fullName>OsEXPA5</fullName>
    </alternativeName>
    <alternativeName>
        <fullName>OsaEXPa1.20</fullName>
    </alternativeName>
</protein>